<protein>
    <recommendedName>
        <fullName>Leucine-rich repeat-containing protein 36</fullName>
    </recommendedName>
    <alternativeName>
        <fullName>ROR gamma-binding protein 70</fullName>
    </alternativeName>
</protein>
<sequence length="754" mass="83823">MAEQWELDEEGIRRLGALTLEQPELVESLSLQGSYAGKIHSIGDAFRNFKNLRSLDLSRNLITSLKGIQYLCSLQDLNLYYNNIPSLVEVSRLQPLPFLKELDLRLNPVVRKDTDYRLFAVYTLQTLEKLDDRTVREGERKAAKLHFSQLGNSENFLLEVEKSSREKTMKNCVTGESSASKVSANVDSRIEMDSNKGLFIPFPNREIKDSLSTSATQGNGTRDQKLDTFPLGTQTQEVARREMPSDNHQEDEFRHYSPRQSTVRSPEKMTREGYQVSFLDNKSSGSSPEKELIPKPDTFHLTHDASLSKCLDVGDSSQIHPYQLPSDVGLENYDSCYSQTLSLHGSLGKRPQRSKNYQEYSIKPSNDIKTTASHSCGDLLTSLSNPDSSTGRLLKLSSDLYATTHFNSDPAVLVNVEQQLSTSLDDLTPAHGSVPNNAVLGNRTTPLRTLLLSPGTSEHRKIFTKRSLSPSKRGFKWKDNILANLNLKHGFQDATGSEPLSSDLGSLHGLAGNHSPPISARTPHVATVLRQLLELVDKHWNGSGSLLLNKKFLGPARDLLLSLVVPAPSQPRCCSHPEDTMKAFCRRELELKEAAQLVPNDMESLKQKLVRVLEENLILSEKIQQLEEGAAISIVSGQQSHTYDDLLHKNQQLTMQVACLNQELAQLKKLEKTVAILHESQRSLVVTNEYLLQQLNKEPKGYSGKALLPPEKGHHLGRSSPFGKSTLSSSSPVAHETGQYLIQSVLDAAPEPGL</sequence>
<feature type="chain" id="PRO_0000275855" description="Leucine-rich repeat-containing protein 36">
    <location>
        <begin position="1"/>
        <end position="754"/>
    </location>
</feature>
<feature type="repeat" description="LRR 1">
    <location>
        <begin position="51"/>
        <end position="72"/>
    </location>
</feature>
<feature type="repeat" description="LRR 2">
    <location>
        <begin position="73"/>
        <end position="94"/>
    </location>
</feature>
<feature type="domain" description="LRRCT">
    <location>
        <begin position="107"/>
        <end position="146"/>
    </location>
</feature>
<feature type="region of interest" description="Disordered" evidence="2">
    <location>
        <begin position="241"/>
        <end position="270"/>
    </location>
</feature>
<feature type="region of interest" description="Disordered" evidence="2">
    <location>
        <begin position="702"/>
        <end position="734"/>
    </location>
</feature>
<feature type="coiled-coil region" evidence="1">
    <location>
        <begin position="600"/>
        <end position="680"/>
    </location>
</feature>
<feature type="compositionally biased region" description="Basic and acidic residues" evidence="2">
    <location>
        <begin position="241"/>
        <end position="255"/>
    </location>
</feature>
<feature type="compositionally biased region" description="Polar residues" evidence="2">
    <location>
        <begin position="722"/>
        <end position="732"/>
    </location>
</feature>
<feature type="splice variant" id="VSP_022963" description="In isoform 2." evidence="3 4">
    <location>
        <begin position="1"/>
        <end position="121"/>
    </location>
</feature>
<feature type="splice variant" id="VSP_057264" description="In isoform 3." evidence="3">
    <original>MAEQWELDE</original>
    <variation>MLRPRFLPP</variation>
    <location>
        <begin position="1"/>
        <end position="9"/>
    </location>
</feature>
<feature type="splice variant" id="VSP_057265" description="In isoform 3." evidence="3">
    <location>
        <begin position="10"/>
        <end position="130"/>
    </location>
</feature>
<feature type="splice variant" id="VSP_022964" description="In isoform 2." evidence="3 4">
    <original>YTLQTLEKL</original>
    <variation>MLRPRFLPP</variation>
    <location>
        <begin position="122"/>
        <end position="130"/>
    </location>
</feature>
<feature type="splice variant" id="VSP_057266" description="In isoform 3." evidence="3">
    <location>
        <begin position="499"/>
        <end position="602"/>
    </location>
</feature>
<feature type="sequence variant" id="VAR_047015" description="In dbSNP:rs9922085.">
    <original>R</original>
    <variation>P</variation>
    <location>
        <position position="222"/>
    </location>
</feature>
<feature type="sequence variant" id="VAR_047016" description="In dbSNP:rs8052655.">
    <original>G</original>
    <variation>S</variation>
    <location>
        <position position="509"/>
    </location>
</feature>
<feature type="sequence variant" id="VAR_047017" description="In dbSNP:rs16957415.">
    <original>S</original>
    <variation>G</variation>
    <location>
        <position position="744"/>
    </location>
</feature>
<feature type="sequence conflict" description="In Ref. 2; AAY46032 and 6; AAH26156." evidence="5" ref="2 6">
    <original>G</original>
    <variation>S</variation>
    <location>
        <position position="43"/>
    </location>
</feature>
<name>LRC36_HUMAN</name>
<dbReference type="EMBL" id="AY313780">
    <property type="protein sequence ID" value="AAP81011.1"/>
    <property type="molecule type" value="mRNA"/>
</dbReference>
<dbReference type="EMBL" id="AY963267">
    <property type="protein sequence ID" value="AAY46032.1"/>
    <property type="molecule type" value="mRNA"/>
</dbReference>
<dbReference type="EMBL" id="AK292311">
    <property type="protein sequence ID" value="BAF85000.1"/>
    <property type="molecule type" value="mRNA"/>
</dbReference>
<dbReference type="EMBL" id="AK301766">
    <property type="protein sequence ID" value="BAH13549.1"/>
    <property type="molecule type" value="mRNA"/>
</dbReference>
<dbReference type="EMBL" id="AC009061">
    <property type="status" value="NOT_ANNOTATED_CDS"/>
    <property type="molecule type" value="Genomic_DNA"/>
</dbReference>
<dbReference type="EMBL" id="CH471092">
    <property type="protein sequence ID" value="EAW83126.1"/>
    <property type="molecule type" value="Genomic_DNA"/>
</dbReference>
<dbReference type="EMBL" id="BC026156">
    <property type="protein sequence ID" value="AAH26156.2"/>
    <property type="molecule type" value="mRNA"/>
</dbReference>
<dbReference type="CCDS" id="CCDS32467.1">
    <molecule id="Q1X8D7-1"/>
</dbReference>
<dbReference type="CCDS" id="CCDS58474.1">
    <molecule id="Q1X8D7-2"/>
</dbReference>
<dbReference type="RefSeq" id="NP_001155047.1">
    <molecule id="Q1X8D7-2"/>
    <property type="nucleotide sequence ID" value="NM_001161575.2"/>
</dbReference>
<dbReference type="RefSeq" id="NP_060766.5">
    <molecule id="Q1X8D7-1"/>
    <property type="nucleotide sequence ID" value="NM_018296.5"/>
</dbReference>
<dbReference type="SMR" id="Q1X8D7"/>
<dbReference type="BioGRID" id="120570">
    <property type="interactions" value="14"/>
</dbReference>
<dbReference type="FunCoup" id="Q1X8D7">
    <property type="interactions" value="23"/>
</dbReference>
<dbReference type="IntAct" id="Q1X8D7">
    <property type="interactions" value="13"/>
</dbReference>
<dbReference type="STRING" id="9606.ENSP00000329943"/>
<dbReference type="iPTMnet" id="Q1X8D7"/>
<dbReference type="PhosphoSitePlus" id="Q1X8D7"/>
<dbReference type="BioMuta" id="LRRC36"/>
<dbReference type="DMDM" id="209572645"/>
<dbReference type="jPOST" id="Q1X8D7"/>
<dbReference type="MassIVE" id="Q1X8D7"/>
<dbReference type="PaxDb" id="9606-ENSP00000329943"/>
<dbReference type="PeptideAtlas" id="Q1X8D7"/>
<dbReference type="ProteomicsDB" id="61251">
    <molecule id="Q1X8D7-1"/>
</dbReference>
<dbReference type="ProteomicsDB" id="61252">
    <molecule id="Q1X8D7-2"/>
</dbReference>
<dbReference type="ProteomicsDB" id="6849"/>
<dbReference type="TopDownProteomics" id="Q1X8D7-2">
    <molecule id="Q1X8D7-2"/>
</dbReference>
<dbReference type="Antibodypedia" id="56057">
    <property type="antibodies" value="81 antibodies from 13 providers"/>
</dbReference>
<dbReference type="DNASU" id="55282"/>
<dbReference type="Ensembl" id="ENST00000329956.11">
    <molecule id="Q1X8D7-1"/>
    <property type="protein sequence ID" value="ENSP00000329943.6"/>
    <property type="gene ID" value="ENSG00000159708.18"/>
</dbReference>
<dbReference type="Ensembl" id="ENST00000435835.3">
    <molecule id="Q1X8D7-3"/>
    <property type="protein sequence ID" value="ENSP00000411122.3"/>
    <property type="gene ID" value="ENSG00000159708.18"/>
</dbReference>
<dbReference type="Ensembl" id="ENST00000563189.5">
    <molecule id="Q1X8D7-2"/>
    <property type="protein sequence ID" value="ENSP00000455103.1"/>
    <property type="gene ID" value="ENSG00000159708.18"/>
</dbReference>
<dbReference type="GeneID" id="55282"/>
<dbReference type="KEGG" id="hsa:55282"/>
<dbReference type="MANE-Select" id="ENST00000329956.11">
    <property type="protein sequence ID" value="ENSP00000329943.6"/>
    <property type="RefSeq nucleotide sequence ID" value="NM_018296.6"/>
    <property type="RefSeq protein sequence ID" value="NP_060766.5"/>
</dbReference>
<dbReference type="UCSC" id="uc002esv.4">
    <molecule id="Q1X8D7-1"/>
    <property type="organism name" value="human"/>
</dbReference>
<dbReference type="AGR" id="HGNC:25615"/>
<dbReference type="CTD" id="55282"/>
<dbReference type="DisGeNET" id="55282"/>
<dbReference type="GeneCards" id="LRRC36"/>
<dbReference type="HGNC" id="HGNC:25615">
    <property type="gene designation" value="LRRC36"/>
</dbReference>
<dbReference type="HPA" id="ENSG00000159708">
    <property type="expression patterns" value="Tissue enriched (testis)"/>
</dbReference>
<dbReference type="neXtProt" id="NX_Q1X8D7"/>
<dbReference type="OpenTargets" id="ENSG00000159708"/>
<dbReference type="PharmGKB" id="PA142671524"/>
<dbReference type="VEuPathDB" id="HostDB:ENSG00000159708"/>
<dbReference type="eggNOG" id="ENOG502S998">
    <property type="taxonomic scope" value="Eukaryota"/>
</dbReference>
<dbReference type="GeneTree" id="ENSGT00530000063884"/>
<dbReference type="HOGENOM" id="CLU_021289_0_0_1"/>
<dbReference type="InParanoid" id="Q1X8D7"/>
<dbReference type="OMA" id="HVVPNDM"/>
<dbReference type="OrthoDB" id="676979at2759"/>
<dbReference type="PAN-GO" id="Q1X8D7">
    <property type="GO annotations" value="0 GO annotations based on evolutionary models"/>
</dbReference>
<dbReference type="PhylomeDB" id="Q1X8D7"/>
<dbReference type="TreeFam" id="TF338646"/>
<dbReference type="PathwayCommons" id="Q1X8D7"/>
<dbReference type="SignaLink" id="Q1X8D7"/>
<dbReference type="BioGRID-ORCS" id="55282">
    <property type="hits" value="14 hits in 1139 CRISPR screens"/>
</dbReference>
<dbReference type="ChiTaRS" id="LRRC36">
    <property type="organism name" value="human"/>
</dbReference>
<dbReference type="GenomeRNAi" id="55282"/>
<dbReference type="Pharos" id="Q1X8D7">
    <property type="development level" value="Tdark"/>
</dbReference>
<dbReference type="PRO" id="PR:Q1X8D7"/>
<dbReference type="Proteomes" id="UP000005640">
    <property type="component" value="Chromosome 16"/>
</dbReference>
<dbReference type="RNAct" id="Q1X8D7">
    <property type="molecule type" value="protein"/>
</dbReference>
<dbReference type="Bgee" id="ENSG00000159708">
    <property type="expression patterns" value="Expressed in left testis and 133 other cell types or tissues"/>
</dbReference>
<dbReference type="ExpressionAtlas" id="Q1X8D7">
    <property type="expression patterns" value="baseline and differential"/>
</dbReference>
<dbReference type="Gene3D" id="3.80.10.10">
    <property type="entry name" value="Ribonuclease Inhibitor"/>
    <property type="match status" value="1"/>
</dbReference>
<dbReference type="InterPro" id="IPR055320">
    <property type="entry name" value="CEP72-like"/>
</dbReference>
<dbReference type="InterPro" id="IPR001611">
    <property type="entry name" value="Leu-rich_rpt"/>
</dbReference>
<dbReference type="InterPro" id="IPR032675">
    <property type="entry name" value="LRR_dom_sf"/>
</dbReference>
<dbReference type="PANTHER" id="PTHR23311">
    <property type="entry name" value="HEAT SHOCK REGULATED 2"/>
    <property type="match status" value="1"/>
</dbReference>
<dbReference type="PANTHER" id="PTHR23311:SF6">
    <property type="entry name" value="LEUCINE-RICH REPEAT-CONTAINING PROTEIN 36"/>
    <property type="match status" value="1"/>
</dbReference>
<dbReference type="Pfam" id="PF14580">
    <property type="entry name" value="LRR_9"/>
    <property type="match status" value="1"/>
</dbReference>
<dbReference type="SUPFAM" id="SSF52058">
    <property type="entry name" value="L domain-like"/>
    <property type="match status" value="1"/>
</dbReference>
<dbReference type="PROSITE" id="PS51450">
    <property type="entry name" value="LRR"/>
    <property type="match status" value="2"/>
</dbReference>
<proteinExistence type="evidence at protein level"/>
<accession>Q1X8D7</accession>
<accession>A4FTV6</accession>
<accession>A6NDE9</accession>
<accession>A8K8E6</accession>
<accession>B7Z7B3</accession>
<accession>Q7Z5K5</accession>
<comment type="interaction">
    <interactant intactId="EBI-12218159">
        <id>Q1X8D7</id>
    </interactant>
    <interactant intactId="EBI-11523345">
        <id>Q8IYF3-3</id>
        <label>TEX11</label>
    </interactant>
    <organismsDiffer>false</organismsDiffer>
    <experiments>3</experiments>
</comment>
<comment type="alternative products">
    <event type="alternative splicing"/>
    <isoform>
        <id>Q1X8D7-1</id>
        <name>1</name>
        <sequence type="displayed"/>
    </isoform>
    <isoform>
        <id>Q1X8D7-2</id>
        <name>2</name>
        <sequence type="described" ref="VSP_022963 VSP_022964"/>
    </isoform>
    <isoform>
        <id>Q1X8D7-3</id>
        <name>3</name>
        <sequence type="described" ref="VSP_057264 VSP_057265 VSP_057266"/>
    </isoform>
</comment>
<evidence type="ECO:0000255" key="1"/>
<evidence type="ECO:0000256" key="2">
    <source>
        <dbReference type="SAM" id="MobiDB-lite"/>
    </source>
</evidence>
<evidence type="ECO:0000303" key="3">
    <source>
    </source>
</evidence>
<evidence type="ECO:0000303" key="4">
    <source ref="1"/>
</evidence>
<evidence type="ECO:0000305" key="5"/>
<gene>
    <name type="primary">LRRC36</name>
    <name type="synonym">RORBP70</name>
</gene>
<organism>
    <name type="scientific">Homo sapiens</name>
    <name type="common">Human</name>
    <dbReference type="NCBI Taxonomy" id="9606"/>
    <lineage>
        <taxon>Eukaryota</taxon>
        <taxon>Metazoa</taxon>
        <taxon>Chordata</taxon>
        <taxon>Craniata</taxon>
        <taxon>Vertebrata</taxon>
        <taxon>Euteleostomi</taxon>
        <taxon>Mammalia</taxon>
        <taxon>Eutheria</taxon>
        <taxon>Euarchontoglires</taxon>
        <taxon>Primates</taxon>
        <taxon>Haplorrhini</taxon>
        <taxon>Catarrhini</taxon>
        <taxon>Hominidae</taxon>
        <taxon>Homo</taxon>
    </lineage>
</organism>
<keyword id="KW-0025">Alternative splicing</keyword>
<keyword id="KW-0175">Coiled coil</keyword>
<keyword id="KW-0433">Leucine-rich repeat</keyword>
<keyword id="KW-1267">Proteomics identification</keyword>
<keyword id="KW-1185">Reference proteome</keyword>
<keyword id="KW-0677">Repeat</keyword>
<reference key="1">
    <citation type="submission" date="2003-07" db="EMBL/GenBank/DDBJ databases">
        <title>Cloning of a different splice of Homo sapiens hypothetical protein FLJ11004 (FLJ11004).</title>
        <authorList>
            <person name="Fang X."/>
            <person name="Wang H."/>
            <person name="Xu Z.Y."/>
            <person name="Yin L.L."/>
            <person name="Xu M."/>
            <person name="Li J.M."/>
            <person name="Zhou Z.M."/>
        </authorList>
    </citation>
    <scope>NUCLEOTIDE SEQUENCE [MRNA] (ISOFORM 2)</scope>
    <source>
        <tissue>Testis</tissue>
    </source>
</reference>
<reference key="2">
    <citation type="submission" date="2005-03" db="EMBL/GenBank/DDBJ databases">
        <authorList>
            <person name="Kim Y.-S."/>
            <person name="Jetten A.M."/>
        </authorList>
    </citation>
    <scope>NUCLEOTIDE SEQUENCE [MRNA] (ISOFORM 1)</scope>
</reference>
<reference key="3">
    <citation type="journal article" date="2004" name="Nat. Genet.">
        <title>Complete sequencing and characterization of 21,243 full-length human cDNAs.</title>
        <authorList>
            <person name="Ota T."/>
            <person name="Suzuki Y."/>
            <person name="Nishikawa T."/>
            <person name="Otsuki T."/>
            <person name="Sugiyama T."/>
            <person name="Irie R."/>
            <person name="Wakamatsu A."/>
            <person name="Hayashi K."/>
            <person name="Sato H."/>
            <person name="Nagai K."/>
            <person name="Kimura K."/>
            <person name="Makita H."/>
            <person name="Sekine M."/>
            <person name="Obayashi M."/>
            <person name="Nishi T."/>
            <person name="Shibahara T."/>
            <person name="Tanaka T."/>
            <person name="Ishii S."/>
            <person name="Yamamoto J."/>
            <person name="Saito K."/>
            <person name="Kawai Y."/>
            <person name="Isono Y."/>
            <person name="Nakamura Y."/>
            <person name="Nagahari K."/>
            <person name="Murakami K."/>
            <person name="Yasuda T."/>
            <person name="Iwayanagi T."/>
            <person name="Wagatsuma M."/>
            <person name="Shiratori A."/>
            <person name="Sudo H."/>
            <person name="Hosoiri T."/>
            <person name="Kaku Y."/>
            <person name="Kodaira H."/>
            <person name="Kondo H."/>
            <person name="Sugawara M."/>
            <person name="Takahashi M."/>
            <person name="Kanda K."/>
            <person name="Yokoi T."/>
            <person name="Furuya T."/>
            <person name="Kikkawa E."/>
            <person name="Omura Y."/>
            <person name="Abe K."/>
            <person name="Kamihara K."/>
            <person name="Katsuta N."/>
            <person name="Sato K."/>
            <person name="Tanikawa M."/>
            <person name="Yamazaki M."/>
            <person name="Ninomiya K."/>
            <person name="Ishibashi T."/>
            <person name="Yamashita H."/>
            <person name="Murakawa K."/>
            <person name="Fujimori K."/>
            <person name="Tanai H."/>
            <person name="Kimata M."/>
            <person name="Watanabe M."/>
            <person name="Hiraoka S."/>
            <person name="Chiba Y."/>
            <person name="Ishida S."/>
            <person name="Ono Y."/>
            <person name="Takiguchi S."/>
            <person name="Watanabe S."/>
            <person name="Yosida M."/>
            <person name="Hotuta T."/>
            <person name="Kusano J."/>
            <person name="Kanehori K."/>
            <person name="Takahashi-Fujii A."/>
            <person name="Hara H."/>
            <person name="Tanase T.-O."/>
            <person name="Nomura Y."/>
            <person name="Togiya S."/>
            <person name="Komai F."/>
            <person name="Hara R."/>
            <person name="Takeuchi K."/>
            <person name="Arita M."/>
            <person name="Imose N."/>
            <person name="Musashino K."/>
            <person name="Yuuki H."/>
            <person name="Oshima A."/>
            <person name="Sasaki N."/>
            <person name="Aotsuka S."/>
            <person name="Yoshikawa Y."/>
            <person name="Matsunawa H."/>
            <person name="Ichihara T."/>
            <person name="Shiohata N."/>
            <person name="Sano S."/>
            <person name="Moriya S."/>
            <person name="Momiyama H."/>
            <person name="Satoh N."/>
            <person name="Takami S."/>
            <person name="Terashima Y."/>
            <person name="Suzuki O."/>
            <person name="Nakagawa S."/>
            <person name="Senoh A."/>
            <person name="Mizoguchi H."/>
            <person name="Goto Y."/>
            <person name="Shimizu F."/>
            <person name="Wakebe H."/>
            <person name="Hishigaki H."/>
            <person name="Watanabe T."/>
            <person name="Sugiyama A."/>
            <person name="Takemoto M."/>
            <person name="Kawakami B."/>
            <person name="Yamazaki M."/>
            <person name="Watanabe K."/>
            <person name="Kumagai A."/>
            <person name="Itakura S."/>
            <person name="Fukuzumi Y."/>
            <person name="Fujimori Y."/>
            <person name="Komiyama M."/>
            <person name="Tashiro H."/>
            <person name="Tanigami A."/>
            <person name="Fujiwara T."/>
            <person name="Ono T."/>
            <person name="Yamada K."/>
            <person name="Fujii Y."/>
            <person name="Ozaki K."/>
            <person name="Hirao M."/>
            <person name="Ohmori Y."/>
            <person name="Kawabata A."/>
            <person name="Hikiji T."/>
            <person name="Kobatake N."/>
            <person name="Inagaki H."/>
            <person name="Ikema Y."/>
            <person name="Okamoto S."/>
            <person name="Okitani R."/>
            <person name="Kawakami T."/>
            <person name="Noguchi S."/>
            <person name="Itoh T."/>
            <person name="Shigeta K."/>
            <person name="Senba T."/>
            <person name="Matsumura K."/>
            <person name="Nakajima Y."/>
            <person name="Mizuno T."/>
            <person name="Morinaga M."/>
            <person name="Sasaki M."/>
            <person name="Togashi T."/>
            <person name="Oyama M."/>
            <person name="Hata H."/>
            <person name="Watanabe M."/>
            <person name="Komatsu T."/>
            <person name="Mizushima-Sugano J."/>
            <person name="Satoh T."/>
            <person name="Shirai Y."/>
            <person name="Takahashi Y."/>
            <person name="Nakagawa K."/>
            <person name="Okumura K."/>
            <person name="Nagase T."/>
            <person name="Nomura N."/>
            <person name="Kikuchi H."/>
            <person name="Masuho Y."/>
            <person name="Yamashita R."/>
            <person name="Nakai K."/>
            <person name="Yada T."/>
            <person name="Nakamura Y."/>
            <person name="Ohara O."/>
            <person name="Isogai T."/>
            <person name="Sugano S."/>
        </authorList>
    </citation>
    <scope>NUCLEOTIDE SEQUENCE [LARGE SCALE MRNA] (ISOFORMS 2 AND 3)</scope>
    <source>
        <tissue>Testis</tissue>
    </source>
</reference>
<reference key="4">
    <citation type="journal article" date="2004" name="Nature">
        <title>The sequence and analysis of duplication-rich human chromosome 16.</title>
        <authorList>
            <person name="Martin J."/>
            <person name="Han C."/>
            <person name="Gordon L.A."/>
            <person name="Terry A."/>
            <person name="Prabhakar S."/>
            <person name="She X."/>
            <person name="Xie G."/>
            <person name="Hellsten U."/>
            <person name="Chan Y.M."/>
            <person name="Altherr M."/>
            <person name="Couronne O."/>
            <person name="Aerts A."/>
            <person name="Bajorek E."/>
            <person name="Black S."/>
            <person name="Blumer H."/>
            <person name="Branscomb E."/>
            <person name="Brown N.C."/>
            <person name="Bruno W.J."/>
            <person name="Buckingham J.M."/>
            <person name="Callen D.F."/>
            <person name="Campbell C.S."/>
            <person name="Campbell M.L."/>
            <person name="Campbell E.W."/>
            <person name="Caoile C."/>
            <person name="Challacombe J.F."/>
            <person name="Chasteen L.A."/>
            <person name="Chertkov O."/>
            <person name="Chi H.C."/>
            <person name="Christensen M."/>
            <person name="Clark L.M."/>
            <person name="Cohn J.D."/>
            <person name="Denys M."/>
            <person name="Detter J.C."/>
            <person name="Dickson M."/>
            <person name="Dimitrijevic-Bussod M."/>
            <person name="Escobar J."/>
            <person name="Fawcett J.J."/>
            <person name="Flowers D."/>
            <person name="Fotopulos D."/>
            <person name="Glavina T."/>
            <person name="Gomez M."/>
            <person name="Gonzales E."/>
            <person name="Goodstein D."/>
            <person name="Goodwin L.A."/>
            <person name="Grady D.L."/>
            <person name="Grigoriev I."/>
            <person name="Groza M."/>
            <person name="Hammon N."/>
            <person name="Hawkins T."/>
            <person name="Haydu L."/>
            <person name="Hildebrand C.E."/>
            <person name="Huang W."/>
            <person name="Israni S."/>
            <person name="Jett J."/>
            <person name="Jewett P.B."/>
            <person name="Kadner K."/>
            <person name="Kimball H."/>
            <person name="Kobayashi A."/>
            <person name="Krawczyk M.-C."/>
            <person name="Leyba T."/>
            <person name="Longmire J.L."/>
            <person name="Lopez F."/>
            <person name="Lou Y."/>
            <person name="Lowry S."/>
            <person name="Ludeman T."/>
            <person name="Manohar C.F."/>
            <person name="Mark G.A."/>
            <person name="McMurray K.L."/>
            <person name="Meincke L.J."/>
            <person name="Morgan J."/>
            <person name="Moyzis R.K."/>
            <person name="Mundt M.O."/>
            <person name="Munk A.C."/>
            <person name="Nandkeshwar R.D."/>
            <person name="Pitluck S."/>
            <person name="Pollard M."/>
            <person name="Predki P."/>
            <person name="Parson-Quintana B."/>
            <person name="Ramirez L."/>
            <person name="Rash S."/>
            <person name="Retterer J."/>
            <person name="Ricke D.O."/>
            <person name="Robinson D.L."/>
            <person name="Rodriguez A."/>
            <person name="Salamov A."/>
            <person name="Saunders E.H."/>
            <person name="Scott D."/>
            <person name="Shough T."/>
            <person name="Stallings R.L."/>
            <person name="Stalvey M."/>
            <person name="Sutherland R.D."/>
            <person name="Tapia R."/>
            <person name="Tesmer J.G."/>
            <person name="Thayer N."/>
            <person name="Thompson L.S."/>
            <person name="Tice H."/>
            <person name="Torney D.C."/>
            <person name="Tran-Gyamfi M."/>
            <person name="Tsai M."/>
            <person name="Ulanovsky L.E."/>
            <person name="Ustaszewska A."/>
            <person name="Vo N."/>
            <person name="White P.S."/>
            <person name="Williams A.L."/>
            <person name="Wills P.L."/>
            <person name="Wu J.-R."/>
            <person name="Wu K."/>
            <person name="Yang J."/>
            <person name="DeJong P."/>
            <person name="Bruce D."/>
            <person name="Doggett N.A."/>
            <person name="Deaven L."/>
            <person name="Schmutz J."/>
            <person name="Grimwood J."/>
            <person name="Richardson P."/>
            <person name="Rokhsar D.S."/>
            <person name="Eichler E.E."/>
            <person name="Gilna P."/>
            <person name="Lucas S.M."/>
            <person name="Myers R.M."/>
            <person name="Rubin E.M."/>
            <person name="Pennacchio L.A."/>
        </authorList>
    </citation>
    <scope>NUCLEOTIDE SEQUENCE [LARGE SCALE GENOMIC DNA]</scope>
</reference>
<reference key="5">
    <citation type="submission" date="2005-07" db="EMBL/GenBank/DDBJ databases">
        <authorList>
            <person name="Mural R.J."/>
            <person name="Istrail S."/>
            <person name="Sutton G.G."/>
            <person name="Florea L."/>
            <person name="Halpern A.L."/>
            <person name="Mobarry C.M."/>
            <person name="Lippert R."/>
            <person name="Walenz B."/>
            <person name="Shatkay H."/>
            <person name="Dew I."/>
            <person name="Miller J.R."/>
            <person name="Flanigan M.J."/>
            <person name="Edwards N.J."/>
            <person name="Bolanos R."/>
            <person name="Fasulo D."/>
            <person name="Halldorsson B.V."/>
            <person name="Hannenhalli S."/>
            <person name="Turner R."/>
            <person name="Yooseph S."/>
            <person name="Lu F."/>
            <person name="Nusskern D.R."/>
            <person name="Shue B.C."/>
            <person name="Zheng X.H."/>
            <person name="Zhong F."/>
            <person name="Delcher A.L."/>
            <person name="Huson D.H."/>
            <person name="Kravitz S.A."/>
            <person name="Mouchard L."/>
            <person name="Reinert K."/>
            <person name="Remington K.A."/>
            <person name="Clark A.G."/>
            <person name="Waterman M.S."/>
            <person name="Eichler E.E."/>
            <person name="Adams M.D."/>
            <person name="Hunkapiller M.W."/>
            <person name="Myers E.W."/>
            <person name="Venter J.C."/>
        </authorList>
    </citation>
    <scope>NUCLEOTIDE SEQUENCE [LARGE SCALE GENOMIC DNA]</scope>
</reference>
<reference key="6">
    <citation type="journal article" date="2004" name="Genome Res.">
        <title>The status, quality, and expansion of the NIH full-length cDNA project: the Mammalian Gene Collection (MGC).</title>
        <authorList>
            <consortium name="The MGC Project Team"/>
        </authorList>
    </citation>
    <scope>NUCLEOTIDE SEQUENCE [LARGE SCALE MRNA] (ISOFORM 1)</scope>
    <source>
        <tissue>Testis</tissue>
    </source>
</reference>